<sequence>MSKADSNSRQGSYKANSINTQDSRMRRHEVTIELRKSKKEDQMFKRRNINDEDLTSPLKELNGQSPVQLSVDEIVAAMNSEDQERQFLGMQSARKMLSRERNPPIDLMIGHGIVPICIRFLQNTNNSMLQFEAAWALTNIASGTSDQTRCVIEHNAVPHFVALLQSKSMNLAEQAVWALGNIAGDGAAARDIVIHHNVIDGILPLINNETPLSFLRNIVWLMSNLCRNKNPSPPFDQVKRLLPVLSQLLLSQDIQVLADACWALSYVTDDDNTKIQAVVDSDAVPRLVKLLQMDEPSIIVPALRSVGNIVTGTDQQTDVVIASGGLPRLGLLLQHNKSNIVKEAAWTVSNITAGNQKQIQAVIQAGIFQQLRTVLEKGDFKAQKEAAWAVTNTTTSGTPEQIVDLIEKYKILKPFIDLLDTKDPRTIKVVQTGLSNLFALAEKLGGTENLCLMVEEMGGLDKLETLQQHENEEVYKKAYAIIDTYFSNGDDEAEQELAPQEVNGALEFNATQPKAPEGGYTF</sequence>
<gene>
    <name type="primary">Pen</name>
    <name type="ORF">CG4799</name>
</gene>
<keyword id="KW-0963">Cytoplasm</keyword>
<keyword id="KW-0539">Nucleus</keyword>
<keyword id="KW-0597">Phosphoprotein</keyword>
<keyword id="KW-0653">Protein transport</keyword>
<keyword id="KW-1185">Reference proteome</keyword>
<keyword id="KW-0677">Repeat</keyword>
<keyword id="KW-0813">Transport</keyword>
<protein>
    <recommendedName>
        <fullName>Importin subunit alpha</fullName>
    </recommendedName>
    <alternativeName>
        <fullName>Karyopherin subunit alpha</fullName>
    </alternativeName>
    <alternativeName>
        <fullName>Pendulin</fullName>
    </alternativeName>
</protein>
<accession>P52295</accession>
<accession>Q24431</accession>
<accession>Q95R96</accession>
<accession>Q9VL45</accession>
<feature type="chain" id="PRO_0000120733" description="Importin subunit alpha">
    <location>
        <begin position="1"/>
        <end position="522"/>
    </location>
</feature>
<feature type="domain" description="IBB" evidence="2">
    <location>
        <begin position="1"/>
        <end position="56"/>
    </location>
</feature>
<feature type="repeat" description="ARM 1">
    <location>
        <begin position="64"/>
        <end position="105"/>
    </location>
</feature>
<feature type="repeat" description="ARM 2">
    <location>
        <begin position="106"/>
        <end position="148"/>
    </location>
</feature>
<feature type="repeat" description="ARM 3">
    <location>
        <begin position="149"/>
        <end position="190"/>
    </location>
</feature>
<feature type="repeat" description="ARM 4">
    <location>
        <begin position="191"/>
        <end position="233"/>
    </location>
</feature>
<feature type="repeat" description="ARM 5">
    <location>
        <begin position="234"/>
        <end position="275"/>
    </location>
</feature>
<feature type="repeat" description="ARM 6">
    <location>
        <begin position="276"/>
        <end position="317"/>
    </location>
</feature>
<feature type="repeat" description="ARM 7">
    <location>
        <begin position="318"/>
        <end position="359"/>
    </location>
</feature>
<feature type="repeat" description="ARM 8">
    <location>
        <begin position="360"/>
        <end position="400"/>
    </location>
</feature>
<feature type="repeat" description="ARM 9">
    <location>
        <begin position="401"/>
        <end position="447"/>
    </location>
</feature>
<feature type="repeat" description="ARM 10">
    <location>
        <begin position="448"/>
        <end position="489"/>
    </location>
</feature>
<feature type="region of interest" description="Disordered" evidence="3">
    <location>
        <begin position="1"/>
        <end position="28"/>
    </location>
</feature>
<feature type="compositionally biased region" description="Polar residues" evidence="3">
    <location>
        <begin position="1"/>
        <end position="22"/>
    </location>
</feature>
<feature type="modified residue" description="Phosphoserine" evidence="5">
    <location>
        <position position="12"/>
    </location>
</feature>
<feature type="modified residue" description="Phosphoserine" evidence="4">
    <location>
        <position position="17"/>
    </location>
</feature>
<feature type="modified residue" description="Phosphoserine" evidence="5">
    <location>
        <position position="56"/>
    </location>
</feature>
<feature type="modified residue" description="Phosphoserine" evidence="5">
    <location>
        <position position="65"/>
    </location>
</feature>
<feature type="sequence conflict" description="In Ref. 1; AAA85260." evidence="6" ref="1">
    <original>L</original>
    <variation>P</variation>
    <location>
        <position position="69"/>
    </location>
</feature>
<dbReference type="EMBL" id="U12269">
    <property type="protein sequence ID" value="AAA85260.1"/>
    <property type="molecule type" value="mRNA"/>
</dbReference>
<dbReference type="EMBL" id="X85752">
    <property type="protein sequence ID" value="CAA59753.1"/>
    <property type="molecule type" value="Genomic_DNA"/>
</dbReference>
<dbReference type="EMBL" id="AE014134">
    <property type="protein sequence ID" value="AAF52853.1"/>
    <property type="molecule type" value="Genomic_DNA"/>
</dbReference>
<dbReference type="EMBL" id="AY061543">
    <property type="protein sequence ID" value="AAL29091.1"/>
    <property type="status" value="ALT_SEQ"/>
    <property type="molecule type" value="mRNA"/>
</dbReference>
<dbReference type="EMBL" id="BT003258">
    <property type="protein sequence ID" value="AAO25015.1"/>
    <property type="molecule type" value="mRNA"/>
</dbReference>
<dbReference type="PIR" id="A57319">
    <property type="entry name" value="A57319"/>
</dbReference>
<dbReference type="RefSeq" id="NP_477041.1">
    <property type="nucleotide sequence ID" value="NM_057693.5"/>
</dbReference>
<dbReference type="SMR" id="P52295"/>
<dbReference type="BioGRID" id="60430">
    <property type="interactions" value="52"/>
</dbReference>
<dbReference type="DIP" id="DIP-17105N"/>
<dbReference type="FunCoup" id="P52295">
    <property type="interactions" value="180"/>
</dbReference>
<dbReference type="IntAct" id="P52295">
    <property type="interactions" value="27"/>
</dbReference>
<dbReference type="MINT" id="P52295"/>
<dbReference type="STRING" id="7227.FBpp0079527"/>
<dbReference type="iPTMnet" id="P52295"/>
<dbReference type="PaxDb" id="7227-FBpp0079527"/>
<dbReference type="DNASU" id="34338"/>
<dbReference type="EnsemblMetazoa" id="FBtr0079937">
    <property type="protein sequence ID" value="FBpp0079527"/>
    <property type="gene ID" value="FBgn0287720"/>
</dbReference>
<dbReference type="GeneID" id="34338"/>
<dbReference type="KEGG" id="dme:Dmel_CG4799"/>
<dbReference type="AGR" id="FB:FBgn0287720"/>
<dbReference type="CTD" id="34338"/>
<dbReference type="FlyBase" id="FBgn0287720">
    <property type="gene designation" value="Pen"/>
</dbReference>
<dbReference type="VEuPathDB" id="VectorBase:FBgn0287720"/>
<dbReference type="eggNOG" id="KOG0166">
    <property type="taxonomic scope" value="Eukaryota"/>
</dbReference>
<dbReference type="GeneTree" id="ENSGT01050000244891"/>
<dbReference type="HOGENOM" id="CLU_018084_6_0_1"/>
<dbReference type="InParanoid" id="P52295"/>
<dbReference type="OMA" id="CVIEHNA"/>
<dbReference type="OrthoDB" id="29145at2759"/>
<dbReference type="PhylomeDB" id="P52295"/>
<dbReference type="Reactome" id="R-DME-5693548">
    <property type="pathway name" value="Sensing of DNA Double Strand Breaks"/>
</dbReference>
<dbReference type="SignaLink" id="P52295"/>
<dbReference type="BioGRID-ORCS" id="34338">
    <property type="hits" value="1 hit in 3 CRISPR screens"/>
</dbReference>
<dbReference type="ChiTaRS" id="Pen">
    <property type="organism name" value="fly"/>
</dbReference>
<dbReference type="GenomeRNAi" id="34338"/>
<dbReference type="PRO" id="PR:P52295"/>
<dbReference type="Proteomes" id="UP000000803">
    <property type="component" value="Chromosome 2L"/>
</dbReference>
<dbReference type="Bgee" id="FBgn0267727">
    <property type="expression patterns" value="Expressed in spermatocyte in post-embryonic organism and 93 other cell types or tissues"/>
</dbReference>
<dbReference type="GO" id="GO:0005737">
    <property type="term" value="C:cytoplasm"/>
    <property type="evidence" value="ECO:0000314"/>
    <property type="project" value="FlyBase"/>
</dbReference>
<dbReference type="GO" id="GO:0005634">
    <property type="term" value="C:nucleus"/>
    <property type="evidence" value="ECO:0000314"/>
    <property type="project" value="FlyBase"/>
</dbReference>
<dbReference type="GO" id="GO:0061608">
    <property type="term" value="F:nuclear import signal receptor activity"/>
    <property type="evidence" value="ECO:0000318"/>
    <property type="project" value="GO_Central"/>
</dbReference>
<dbReference type="GO" id="GO:0008139">
    <property type="term" value="F:nuclear localization sequence binding"/>
    <property type="evidence" value="ECO:0000318"/>
    <property type="project" value="GO_Central"/>
</dbReference>
<dbReference type="GO" id="GO:0007301">
    <property type="term" value="P:female germline ring canal formation"/>
    <property type="evidence" value="ECO:0000315"/>
    <property type="project" value="FlyBase"/>
</dbReference>
<dbReference type="GO" id="GO:0042332">
    <property type="term" value="P:gravitaxis"/>
    <property type="evidence" value="ECO:0000315"/>
    <property type="project" value="FlyBase"/>
</dbReference>
<dbReference type="GO" id="GO:0048542">
    <property type="term" value="P:lymph gland development"/>
    <property type="evidence" value="ECO:0000315"/>
    <property type="project" value="FlyBase"/>
</dbReference>
<dbReference type="GO" id="GO:0006607">
    <property type="term" value="P:NLS-bearing protein import into nucleus"/>
    <property type="evidence" value="ECO:0000315"/>
    <property type="project" value="FlyBase"/>
</dbReference>
<dbReference type="GO" id="GO:0007291">
    <property type="term" value="P:sperm individualization"/>
    <property type="evidence" value="ECO:0000315"/>
    <property type="project" value="FlyBase"/>
</dbReference>
<dbReference type="FunFam" id="1.20.5.690:FF:000009">
    <property type="entry name" value="Importin subunit alpha"/>
    <property type="match status" value="1"/>
</dbReference>
<dbReference type="FunFam" id="1.25.10.10:FF:000009">
    <property type="entry name" value="Importin subunit alpha"/>
    <property type="match status" value="1"/>
</dbReference>
<dbReference type="Gene3D" id="1.20.5.690">
    <property type="entry name" value="Importin-alpha, importin-beta-binding domain"/>
    <property type="match status" value="1"/>
</dbReference>
<dbReference type="Gene3D" id="1.25.10.10">
    <property type="entry name" value="Leucine-rich Repeat Variant"/>
    <property type="match status" value="1"/>
</dbReference>
<dbReference type="InterPro" id="IPR011989">
    <property type="entry name" value="ARM-like"/>
</dbReference>
<dbReference type="InterPro" id="IPR016024">
    <property type="entry name" value="ARM-type_fold"/>
</dbReference>
<dbReference type="InterPro" id="IPR032413">
    <property type="entry name" value="Arm_3"/>
</dbReference>
<dbReference type="InterPro" id="IPR000225">
    <property type="entry name" value="Armadillo"/>
</dbReference>
<dbReference type="InterPro" id="IPR002652">
    <property type="entry name" value="Importin-a_IBB"/>
</dbReference>
<dbReference type="InterPro" id="IPR036975">
    <property type="entry name" value="Importin-a_IBB_sf"/>
</dbReference>
<dbReference type="InterPro" id="IPR024931">
    <property type="entry name" value="Importin_alpha"/>
</dbReference>
<dbReference type="PANTHER" id="PTHR23316">
    <property type="entry name" value="IMPORTIN ALPHA"/>
    <property type="match status" value="1"/>
</dbReference>
<dbReference type="Pfam" id="PF00514">
    <property type="entry name" value="Arm"/>
    <property type="match status" value="6"/>
</dbReference>
<dbReference type="Pfam" id="PF16186">
    <property type="entry name" value="Arm_3"/>
    <property type="match status" value="1"/>
</dbReference>
<dbReference type="Pfam" id="PF01749">
    <property type="entry name" value="IBB"/>
    <property type="match status" value="1"/>
</dbReference>
<dbReference type="PIRSF" id="PIRSF005673">
    <property type="entry name" value="Importin_alpha"/>
    <property type="match status" value="1"/>
</dbReference>
<dbReference type="SMART" id="SM00185">
    <property type="entry name" value="ARM"/>
    <property type="match status" value="8"/>
</dbReference>
<dbReference type="SUPFAM" id="SSF48371">
    <property type="entry name" value="ARM repeat"/>
    <property type="match status" value="1"/>
</dbReference>
<dbReference type="PROSITE" id="PS50176">
    <property type="entry name" value="ARM_REPEAT"/>
    <property type="match status" value="3"/>
</dbReference>
<dbReference type="PROSITE" id="PS51214">
    <property type="entry name" value="IBB"/>
    <property type="match status" value="1"/>
</dbReference>
<reference key="1">
    <citation type="journal article" date="1995" name="J. Cell Biol.">
        <title>Pendulin, a Drosophila protein with cell cycle-dependent nuclear localization, is required for normal cell proliferation.</title>
        <authorList>
            <person name="Kuessel P."/>
            <person name="Frasch M."/>
        </authorList>
    </citation>
    <scope>NUCLEOTIDE SEQUENCE [MRNA]</scope>
    <source>
        <strain>Oregon-R</strain>
    </source>
</reference>
<reference key="2">
    <citation type="journal article" date="1995" name="J. Cell Biol.">
        <title>The overgrown hematopoietic organs-31 tumor suppressor gene of Drosophila encodes an importin-like protein accumulating in the nucleus at the onset of mitosis.</title>
        <authorList>
            <person name="Torok I."/>
            <person name="Strand D."/>
            <person name="Schmitt R."/>
            <person name="Tick G."/>
            <person name="Torok T."/>
            <person name="Kiss I."/>
            <person name="Mechler B.M."/>
        </authorList>
    </citation>
    <scope>NUCLEOTIDE SEQUENCE [GENOMIC DNA]</scope>
    <source>
        <strain>Oregon-R</strain>
    </source>
</reference>
<reference key="3">
    <citation type="journal article" date="2000" name="Science">
        <title>The genome sequence of Drosophila melanogaster.</title>
        <authorList>
            <person name="Adams M.D."/>
            <person name="Celniker S.E."/>
            <person name="Holt R.A."/>
            <person name="Evans C.A."/>
            <person name="Gocayne J.D."/>
            <person name="Amanatides P.G."/>
            <person name="Scherer S.E."/>
            <person name="Li P.W."/>
            <person name="Hoskins R.A."/>
            <person name="Galle R.F."/>
            <person name="George R.A."/>
            <person name="Lewis S.E."/>
            <person name="Richards S."/>
            <person name="Ashburner M."/>
            <person name="Henderson S.N."/>
            <person name="Sutton G.G."/>
            <person name="Wortman J.R."/>
            <person name="Yandell M.D."/>
            <person name="Zhang Q."/>
            <person name="Chen L.X."/>
            <person name="Brandon R.C."/>
            <person name="Rogers Y.-H.C."/>
            <person name="Blazej R.G."/>
            <person name="Champe M."/>
            <person name="Pfeiffer B.D."/>
            <person name="Wan K.H."/>
            <person name="Doyle C."/>
            <person name="Baxter E.G."/>
            <person name="Helt G."/>
            <person name="Nelson C.R."/>
            <person name="Miklos G.L.G."/>
            <person name="Abril J.F."/>
            <person name="Agbayani A."/>
            <person name="An H.-J."/>
            <person name="Andrews-Pfannkoch C."/>
            <person name="Baldwin D."/>
            <person name="Ballew R.M."/>
            <person name="Basu A."/>
            <person name="Baxendale J."/>
            <person name="Bayraktaroglu L."/>
            <person name="Beasley E.M."/>
            <person name="Beeson K.Y."/>
            <person name="Benos P.V."/>
            <person name="Berman B.P."/>
            <person name="Bhandari D."/>
            <person name="Bolshakov S."/>
            <person name="Borkova D."/>
            <person name="Botchan M.R."/>
            <person name="Bouck J."/>
            <person name="Brokstein P."/>
            <person name="Brottier P."/>
            <person name="Burtis K.C."/>
            <person name="Busam D.A."/>
            <person name="Butler H."/>
            <person name="Cadieu E."/>
            <person name="Center A."/>
            <person name="Chandra I."/>
            <person name="Cherry J.M."/>
            <person name="Cawley S."/>
            <person name="Dahlke C."/>
            <person name="Davenport L.B."/>
            <person name="Davies P."/>
            <person name="de Pablos B."/>
            <person name="Delcher A."/>
            <person name="Deng Z."/>
            <person name="Mays A.D."/>
            <person name="Dew I."/>
            <person name="Dietz S.M."/>
            <person name="Dodson K."/>
            <person name="Doup L.E."/>
            <person name="Downes M."/>
            <person name="Dugan-Rocha S."/>
            <person name="Dunkov B.C."/>
            <person name="Dunn P."/>
            <person name="Durbin K.J."/>
            <person name="Evangelista C.C."/>
            <person name="Ferraz C."/>
            <person name="Ferriera S."/>
            <person name="Fleischmann W."/>
            <person name="Fosler C."/>
            <person name="Gabrielian A.E."/>
            <person name="Garg N.S."/>
            <person name="Gelbart W.M."/>
            <person name="Glasser K."/>
            <person name="Glodek A."/>
            <person name="Gong F."/>
            <person name="Gorrell J.H."/>
            <person name="Gu Z."/>
            <person name="Guan P."/>
            <person name="Harris M."/>
            <person name="Harris N.L."/>
            <person name="Harvey D.A."/>
            <person name="Heiman T.J."/>
            <person name="Hernandez J.R."/>
            <person name="Houck J."/>
            <person name="Hostin D."/>
            <person name="Houston K.A."/>
            <person name="Howland T.J."/>
            <person name="Wei M.-H."/>
            <person name="Ibegwam C."/>
            <person name="Jalali M."/>
            <person name="Kalush F."/>
            <person name="Karpen G.H."/>
            <person name="Ke Z."/>
            <person name="Kennison J.A."/>
            <person name="Ketchum K.A."/>
            <person name="Kimmel B.E."/>
            <person name="Kodira C.D."/>
            <person name="Kraft C.L."/>
            <person name="Kravitz S."/>
            <person name="Kulp D."/>
            <person name="Lai Z."/>
            <person name="Lasko P."/>
            <person name="Lei Y."/>
            <person name="Levitsky A.A."/>
            <person name="Li J.H."/>
            <person name="Li Z."/>
            <person name="Liang Y."/>
            <person name="Lin X."/>
            <person name="Liu X."/>
            <person name="Mattei B."/>
            <person name="McIntosh T.C."/>
            <person name="McLeod M.P."/>
            <person name="McPherson D."/>
            <person name="Merkulov G."/>
            <person name="Milshina N.V."/>
            <person name="Mobarry C."/>
            <person name="Morris J."/>
            <person name="Moshrefi A."/>
            <person name="Mount S.M."/>
            <person name="Moy M."/>
            <person name="Murphy B."/>
            <person name="Murphy L."/>
            <person name="Muzny D.M."/>
            <person name="Nelson D.L."/>
            <person name="Nelson D.R."/>
            <person name="Nelson K.A."/>
            <person name="Nixon K."/>
            <person name="Nusskern D.R."/>
            <person name="Pacleb J.M."/>
            <person name="Palazzolo M."/>
            <person name="Pittman G.S."/>
            <person name="Pan S."/>
            <person name="Pollard J."/>
            <person name="Puri V."/>
            <person name="Reese M.G."/>
            <person name="Reinert K."/>
            <person name="Remington K."/>
            <person name="Saunders R.D.C."/>
            <person name="Scheeler F."/>
            <person name="Shen H."/>
            <person name="Shue B.C."/>
            <person name="Siden-Kiamos I."/>
            <person name="Simpson M."/>
            <person name="Skupski M.P."/>
            <person name="Smith T.J."/>
            <person name="Spier E."/>
            <person name="Spradling A.C."/>
            <person name="Stapleton M."/>
            <person name="Strong R."/>
            <person name="Sun E."/>
            <person name="Svirskas R."/>
            <person name="Tector C."/>
            <person name="Turner R."/>
            <person name="Venter E."/>
            <person name="Wang A.H."/>
            <person name="Wang X."/>
            <person name="Wang Z.-Y."/>
            <person name="Wassarman D.A."/>
            <person name="Weinstock G.M."/>
            <person name="Weissenbach J."/>
            <person name="Williams S.M."/>
            <person name="Woodage T."/>
            <person name="Worley K.C."/>
            <person name="Wu D."/>
            <person name="Yang S."/>
            <person name="Yao Q.A."/>
            <person name="Ye J."/>
            <person name="Yeh R.-F."/>
            <person name="Zaveri J.S."/>
            <person name="Zhan M."/>
            <person name="Zhang G."/>
            <person name="Zhao Q."/>
            <person name="Zheng L."/>
            <person name="Zheng X.H."/>
            <person name="Zhong F.N."/>
            <person name="Zhong W."/>
            <person name="Zhou X."/>
            <person name="Zhu S.C."/>
            <person name="Zhu X."/>
            <person name="Smith H.O."/>
            <person name="Gibbs R.A."/>
            <person name="Myers E.W."/>
            <person name="Rubin G.M."/>
            <person name="Venter J.C."/>
        </authorList>
    </citation>
    <scope>NUCLEOTIDE SEQUENCE [LARGE SCALE GENOMIC DNA]</scope>
    <source>
        <strain>Berkeley</strain>
    </source>
</reference>
<reference key="4">
    <citation type="journal article" date="2002" name="Genome Biol.">
        <title>Annotation of the Drosophila melanogaster euchromatic genome: a systematic review.</title>
        <authorList>
            <person name="Misra S."/>
            <person name="Crosby M.A."/>
            <person name="Mungall C.J."/>
            <person name="Matthews B.B."/>
            <person name="Campbell K.S."/>
            <person name="Hradecky P."/>
            <person name="Huang Y."/>
            <person name="Kaminker J.S."/>
            <person name="Millburn G.H."/>
            <person name="Prochnik S.E."/>
            <person name="Smith C.D."/>
            <person name="Tupy J.L."/>
            <person name="Whitfield E.J."/>
            <person name="Bayraktaroglu L."/>
            <person name="Berman B.P."/>
            <person name="Bettencourt B.R."/>
            <person name="Celniker S.E."/>
            <person name="de Grey A.D.N.J."/>
            <person name="Drysdale R.A."/>
            <person name="Harris N.L."/>
            <person name="Richter J."/>
            <person name="Russo S."/>
            <person name="Schroeder A.J."/>
            <person name="Shu S.Q."/>
            <person name="Stapleton M."/>
            <person name="Yamada C."/>
            <person name="Ashburner M."/>
            <person name="Gelbart W.M."/>
            <person name="Rubin G.M."/>
            <person name="Lewis S.E."/>
        </authorList>
    </citation>
    <scope>GENOME REANNOTATION</scope>
    <source>
        <strain>Berkeley</strain>
    </source>
</reference>
<reference key="5">
    <citation type="journal article" date="2002" name="Genome Biol.">
        <title>A Drosophila full-length cDNA resource.</title>
        <authorList>
            <person name="Stapleton M."/>
            <person name="Carlson J.W."/>
            <person name="Brokstein P."/>
            <person name="Yu C."/>
            <person name="Champe M."/>
            <person name="George R.A."/>
            <person name="Guarin H."/>
            <person name="Kronmiller B."/>
            <person name="Pacleb J.M."/>
            <person name="Park S."/>
            <person name="Wan K.H."/>
            <person name="Rubin G.M."/>
            <person name="Celniker S.E."/>
        </authorList>
    </citation>
    <scope>NUCLEOTIDE SEQUENCE [LARGE SCALE MRNA]</scope>
    <source>
        <strain>Berkeley</strain>
        <tissue>Embryo</tissue>
        <tissue>Larva</tissue>
        <tissue>Pupae</tissue>
    </source>
</reference>
<reference key="6">
    <citation type="journal article" date="2007" name="Mol. Biosyst.">
        <title>An integrated chemical, mass spectrometric and computational strategy for (quantitative) phosphoproteomics: application to Drosophila melanogaster Kc167 cells.</title>
        <authorList>
            <person name="Bodenmiller B."/>
            <person name="Mueller L.N."/>
            <person name="Pedrioli P.G.A."/>
            <person name="Pflieger D."/>
            <person name="Juenger M.A."/>
            <person name="Eng J.K."/>
            <person name="Aebersold R."/>
            <person name="Tao W.A."/>
        </authorList>
    </citation>
    <scope>PHOSPHORYLATION [LARGE SCALE ANALYSIS] AT SER-17</scope>
    <scope>IDENTIFICATION BY MASS SPECTROMETRY</scope>
</reference>
<reference key="7">
    <citation type="journal article" date="2008" name="J. Proteome Res.">
        <title>Phosphoproteome analysis of Drosophila melanogaster embryos.</title>
        <authorList>
            <person name="Zhai B."/>
            <person name="Villen J."/>
            <person name="Beausoleil S.A."/>
            <person name="Mintseris J."/>
            <person name="Gygi S.P."/>
        </authorList>
    </citation>
    <scope>PHOSPHORYLATION [LARGE SCALE ANALYSIS] AT SER-12; SER-56 AND SER-65</scope>
    <scope>IDENTIFICATION BY MASS SPECTROMETRY</scope>
    <source>
        <tissue>Embryo</tissue>
    </source>
</reference>
<organism>
    <name type="scientific">Drosophila melanogaster</name>
    <name type="common">Fruit fly</name>
    <dbReference type="NCBI Taxonomy" id="7227"/>
    <lineage>
        <taxon>Eukaryota</taxon>
        <taxon>Metazoa</taxon>
        <taxon>Ecdysozoa</taxon>
        <taxon>Arthropoda</taxon>
        <taxon>Hexapoda</taxon>
        <taxon>Insecta</taxon>
        <taxon>Pterygota</taxon>
        <taxon>Neoptera</taxon>
        <taxon>Endopterygota</taxon>
        <taxon>Diptera</taxon>
        <taxon>Brachycera</taxon>
        <taxon>Muscomorpha</taxon>
        <taxon>Ephydroidea</taxon>
        <taxon>Drosophilidae</taxon>
        <taxon>Drosophila</taxon>
        <taxon>Sophophora</taxon>
    </lineage>
</organism>
<name>IMA_DROME</name>
<proteinExistence type="evidence at protein level"/>
<comment type="function">
    <text evidence="1">Binds specifically and directly to substrates containing either a simple or bipartite NLS motif. Promotes docking of import substrates to the nuclear envelope. Seems to act as a cytosolic receptor for both simple and bipartite NLS motifs (By similarity).</text>
</comment>
<comment type="function">
    <text>It is required for normal cell proliferation and may serve as an adapter molecule to form complexes with other proteins. May act as a tumor suppressor in hematopoietic cells. May play a role in the nuclear import of karyophilic proteins and some of these may be required for the normal transmission and function of proliferative signals in the cells.</text>
</comment>
<comment type="subunit">
    <text>Forms a complex with importin beta subunit.</text>
</comment>
<comment type="subcellular location">
    <subcellularLocation>
        <location>Cytoplasm</location>
    </subcellularLocation>
    <subcellularLocation>
        <location>Nucleus</location>
    </subcellularLocation>
    <text>Shuttles between the cytoplasm and nucleus in a cell cycle-dependent manner.</text>
</comment>
<comment type="tissue specificity">
    <text>Predominantly expressed in the neuroblast stem cells.</text>
</comment>
<comment type="developmental stage">
    <text>High levels are detected during the first half of embryogenesis reaching a maximum between 4 and 8 hours of development. Protein expression increases again from the third larval instar onwards. It is expressed in a maternal/early embryonic phase, and again during morphogenesis in late larval and pupal stages.</text>
</comment>
<comment type="similarity">
    <text evidence="6">Belongs to the importin alpha family.</text>
</comment>
<comment type="caution">
    <text evidence="7">Was originally thought to be the overgrown hematopoietic organs-31 protein (OHO-31).</text>
</comment>
<comment type="sequence caution" evidence="6">
    <conflict type="erroneous translation">
        <sequence resource="EMBL-CDS" id="AAL29091"/>
    </conflict>
    <text>Wrong choice of frame.</text>
</comment>
<evidence type="ECO:0000250" key="1"/>
<evidence type="ECO:0000255" key="2">
    <source>
        <dbReference type="PROSITE-ProRule" id="PRU00561"/>
    </source>
</evidence>
<evidence type="ECO:0000256" key="3">
    <source>
        <dbReference type="SAM" id="MobiDB-lite"/>
    </source>
</evidence>
<evidence type="ECO:0000269" key="4">
    <source>
    </source>
</evidence>
<evidence type="ECO:0000269" key="5">
    <source>
    </source>
</evidence>
<evidence type="ECO:0000305" key="6"/>
<evidence type="ECO:0000305" key="7">
    <source>
    </source>
</evidence>